<feature type="chain" id="PRO_0000105978" description="Nucleoprotein">
    <location>
        <begin position="1"/>
        <end position="409"/>
    </location>
</feature>
<feature type="domain" description="CoV N NTD" evidence="2">
    <location>
        <begin position="31"/>
        <end position="156"/>
    </location>
</feature>
<feature type="domain" description="CoV N CTD" evidence="3">
    <location>
        <begin position="215"/>
        <end position="331"/>
    </location>
</feature>
<feature type="region of interest" description="Disordered" evidence="4">
    <location>
        <begin position="1"/>
        <end position="84"/>
    </location>
</feature>
<feature type="region of interest" description="RNA-binding" evidence="1">
    <location>
        <begin position="29"/>
        <end position="160"/>
    </location>
</feature>
<feature type="region of interest" description="Disordered" evidence="4">
    <location>
        <begin position="121"/>
        <end position="194"/>
    </location>
</feature>
<feature type="region of interest" description="Dimerization" evidence="1">
    <location>
        <begin position="226"/>
        <end position="333"/>
    </location>
</feature>
<feature type="region of interest" description="Disordered" evidence="4">
    <location>
        <begin position="327"/>
        <end position="396"/>
    </location>
</feature>
<feature type="compositionally biased region" description="Low complexity" evidence="4">
    <location>
        <begin position="15"/>
        <end position="31"/>
    </location>
</feature>
<feature type="compositionally biased region" description="Basic residues" evidence="4">
    <location>
        <begin position="70"/>
        <end position="84"/>
    </location>
</feature>
<feature type="compositionally biased region" description="Low complexity" evidence="4">
    <location>
        <begin position="162"/>
        <end position="179"/>
    </location>
</feature>
<feature type="compositionally biased region" description="Basic and acidic residues" evidence="4">
    <location>
        <begin position="180"/>
        <end position="192"/>
    </location>
</feature>
<feature type="compositionally biased region" description="Basic residues" evidence="4">
    <location>
        <begin position="358"/>
        <end position="367"/>
    </location>
</feature>
<feature type="compositionally biased region" description="Basic and acidic residues" evidence="4">
    <location>
        <begin position="368"/>
        <end position="384"/>
    </location>
</feature>
<feature type="modified residue" description="Phosphoserine; by host" evidence="1">
    <location>
        <position position="190"/>
    </location>
</feature>
<feature type="modified residue" description="Phosphoserine; by host" evidence="1">
    <location>
        <position position="192"/>
    </location>
</feature>
<feature type="modified residue" description="Phosphothreonine; by host" evidence="1">
    <location>
        <position position="378"/>
    </location>
</feature>
<feature type="modified residue" description="Phosphoserine; by host" evidence="1">
    <location>
        <position position="379"/>
    </location>
</feature>
<feature type="disulfide bond" evidence="1">
    <location>
        <begin position="281"/>
        <end position="308"/>
    </location>
</feature>
<feature type="disulfide bond" evidence="1">
    <location>
        <begin position="320"/>
        <end position="323"/>
    </location>
</feature>
<feature type="strand" evidence="5">
    <location>
        <begin position="39"/>
        <end position="45"/>
    </location>
</feature>
<feature type="strand" evidence="5">
    <location>
        <begin position="51"/>
        <end position="53"/>
    </location>
</feature>
<feature type="strand" evidence="5">
    <location>
        <begin position="60"/>
        <end position="62"/>
    </location>
</feature>
<feature type="helix" evidence="5">
    <location>
        <begin position="64"/>
        <end position="66"/>
    </location>
</feature>
<feature type="strand" evidence="5">
    <location>
        <begin position="68"/>
        <end position="73"/>
    </location>
</feature>
<feature type="strand" evidence="5">
    <location>
        <begin position="80"/>
        <end position="83"/>
    </location>
</feature>
<feature type="strand" evidence="5">
    <location>
        <begin position="90"/>
        <end position="95"/>
    </location>
</feature>
<feature type="turn" evidence="5">
    <location>
        <begin position="100"/>
        <end position="103"/>
    </location>
</feature>
<feature type="strand" evidence="5">
    <location>
        <begin position="113"/>
        <end position="117"/>
    </location>
</feature>
<feature type="turn" evidence="5">
    <location>
        <begin position="134"/>
        <end position="136"/>
    </location>
</feature>
<organismHost>
    <name type="scientific">Gallus gallus</name>
    <name type="common">Chicken</name>
    <dbReference type="NCBI Taxonomy" id="9031"/>
</organismHost>
<dbReference type="EMBL" id="AJ311362">
    <property type="protein sequence ID" value="CAC39307.1"/>
    <property type="molecule type" value="Genomic_RNA"/>
</dbReference>
<dbReference type="PDB" id="2BTL">
    <property type="method" value="X-ray"/>
    <property type="resolution" value="1.95 A"/>
    <property type="chains" value="B=29-160"/>
</dbReference>
<dbReference type="PDB" id="2BXX">
    <property type="method" value="X-ray"/>
    <property type="resolution" value="1.85 A"/>
    <property type="chains" value="A/B=29-160"/>
</dbReference>
<dbReference type="PDB" id="2C86">
    <property type="method" value="X-ray"/>
    <property type="resolution" value="3.00 A"/>
    <property type="chains" value="A/B=29-160"/>
</dbReference>
<dbReference type="PDBsum" id="2BTL"/>
<dbReference type="PDBsum" id="2BXX"/>
<dbReference type="PDBsum" id="2C86"/>
<dbReference type="SMR" id="P69598"/>
<dbReference type="EvolutionaryTrace" id="P69598"/>
<dbReference type="GO" id="GO:0044172">
    <property type="term" value="C:host cell endoplasmic reticulum-Golgi intermediate compartment"/>
    <property type="evidence" value="ECO:0007669"/>
    <property type="project" value="UniProtKB-SubCell"/>
</dbReference>
<dbReference type="GO" id="GO:0044177">
    <property type="term" value="C:host cell Golgi apparatus"/>
    <property type="evidence" value="ECO:0007669"/>
    <property type="project" value="UniProtKB-SubCell"/>
</dbReference>
<dbReference type="GO" id="GO:1990904">
    <property type="term" value="C:ribonucleoprotein complex"/>
    <property type="evidence" value="ECO:0007669"/>
    <property type="project" value="UniProtKB-KW"/>
</dbReference>
<dbReference type="GO" id="GO:0019013">
    <property type="term" value="C:viral nucleocapsid"/>
    <property type="evidence" value="ECO:0007669"/>
    <property type="project" value="UniProtKB-UniRule"/>
</dbReference>
<dbReference type="GO" id="GO:0003723">
    <property type="term" value="F:RNA binding"/>
    <property type="evidence" value="ECO:0007669"/>
    <property type="project" value="UniProtKB-UniRule"/>
</dbReference>
<dbReference type="CDD" id="cd21595">
    <property type="entry name" value="CoV_N-CTD"/>
    <property type="match status" value="1"/>
</dbReference>
<dbReference type="CDD" id="cd21554">
    <property type="entry name" value="CoV_N-NTD"/>
    <property type="match status" value="1"/>
</dbReference>
<dbReference type="HAMAP" id="MF_04097">
    <property type="entry name" value="GAMMA_CORONA_NCAP"/>
    <property type="match status" value="1"/>
</dbReference>
<dbReference type="InterPro" id="IPR044344">
    <property type="entry name" value="N_prot_C_CoV"/>
</dbReference>
<dbReference type="InterPro" id="IPR044345">
    <property type="entry name" value="N_prot_N_CoV"/>
</dbReference>
<dbReference type="InterPro" id="IPR042547">
    <property type="entry name" value="NCAP_gCoV"/>
</dbReference>
<dbReference type="InterPro" id="IPR001218">
    <property type="entry name" value="Nucleocap_CoV"/>
</dbReference>
<dbReference type="InterPro" id="IPR037179">
    <property type="entry name" value="Nucleocapsid_C"/>
</dbReference>
<dbReference type="InterPro" id="IPR037195">
    <property type="entry name" value="Nucleocapsid_N"/>
</dbReference>
<dbReference type="Pfam" id="PF00937">
    <property type="entry name" value="CoV_nucleocap"/>
    <property type="match status" value="1"/>
</dbReference>
<dbReference type="PIRSF" id="PIRSF003888">
    <property type="entry name" value="Corona_nucleocap"/>
    <property type="match status" value="1"/>
</dbReference>
<dbReference type="SUPFAM" id="SSF110304">
    <property type="entry name" value="Coronavirus RNA-binding domain"/>
    <property type="match status" value="1"/>
</dbReference>
<dbReference type="SUPFAM" id="SSF103068">
    <property type="entry name" value="Nucleocapsid protein dimerization domain"/>
    <property type="match status" value="1"/>
</dbReference>
<dbReference type="PROSITE" id="PS51929">
    <property type="entry name" value="COV_N_CTD"/>
    <property type="match status" value="1"/>
</dbReference>
<dbReference type="PROSITE" id="PS51928">
    <property type="entry name" value="COV_N_NTD"/>
    <property type="match status" value="1"/>
</dbReference>
<protein>
    <recommendedName>
        <fullName evidence="1">Nucleoprotein</fullName>
    </recommendedName>
    <alternativeName>
        <fullName evidence="1">Nucleocapsid protein</fullName>
        <shortName evidence="1">NC</shortName>
        <shortName evidence="1">Protein N</shortName>
    </alternativeName>
</protein>
<organism>
    <name type="scientific">Avian infectious bronchitis virus (strain Beaudette US)</name>
    <name type="common">IBV</name>
    <dbReference type="NCBI Taxonomy" id="160750"/>
    <lineage>
        <taxon>Viruses</taxon>
        <taxon>Riboviria</taxon>
        <taxon>Orthornavirae</taxon>
        <taxon>Pisuviricota</taxon>
        <taxon>Pisoniviricetes</taxon>
        <taxon>Nidovirales</taxon>
        <taxon>Cornidovirineae</taxon>
        <taxon>Coronaviridae</taxon>
        <taxon>Orthocoronavirinae</taxon>
        <taxon>Gammacoronavirus</taxon>
        <taxon>Igacovirus</taxon>
        <taxon>Avian coronavirus</taxon>
    </lineage>
</organism>
<name>NCAP_IBVBU</name>
<reference key="1">
    <citation type="journal article" date="2001" name="J. Virol.">
        <title>Reverse genetics system for the avian coronavirus infectious bronchitis virus.</title>
        <authorList>
            <person name="Casais R."/>
            <person name="Thiel V."/>
            <person name="Siddell S.G."/>
            <person name="Cavanagh D."/>
            <person name="Britton P."/>
        </authorList>
    </citation>
    <scope>NUCLEOTIDE SEQUENCE [GENOMIC RNA]</scope>
</reference>
<keyword id="KW-0002">3D-structure</keyword>
<keyword id="KW-0013">ADP-ribosylation</keyword>
<keyword id="KW-1015">Disulfide bond</keyword>
<keyword id="KW-1040">Host Golgi apparatus</keyword>
<keyword id="KW-0597">Phosphoprotein</keyword>
<keyword id="KW-0687">Ribonucleoprotein</keyword>
<keyword id="KW-0694">RNA-binding</keyword>
<keyword id="KW-0804">Transcription</keyword>
<keyword id="KW-0805">Transcription regulation</keyword>
<keyword id="KW-0543">Viral nucleoprotein</keyword>
<keyword id="KW-0946">Virion</keyword>
<sequence length="409" mass="45032">MASGKAAGKTDAPAPVIKLGGPKPPKVGSSGNASWFQAIKAKKLNTPPPKFEGSGVPDNENIKPSQQHGYWRRQARFKPGKGGRKPVPDAWYFYYTGTGPAADLNWGDTQDGIVWVAAKGADTKSRSNQGTRDPDKFDQYPLRFSDGGPDGNFRWDFIPLNRGRSGRSTAASSAAASRAPSREGSRGRRSDSGDDLIARAAKIIQDQQKKGSRITKAKADEMAHRRYCKRTIPPNYRVDQVFGPRTKGKEGNFGDDKMNEEGIKDGRVTAMLNLVPSSHACLFGSRVTPKLQLDGLHLRFEFTTVVPCDDPQFDNYVKICDQCVDGVGTRPKDDEPKPKSRSSSRPATRGNSPAPRQQRPKKEKKLKKQDDEADKALTSDEERNNAQLEFYDEPKVINWGDAALGENEL</sequence>
<accession>P69598</accession>
<accession>Q89902</accession>
<gene>
    <name evidence="1" type="primary">N</name>
    <name type="ORF">6</name>
</gene>
<evidence type="ECO:0000255" key="1">
    <source>
        <dbReference type="HAMAP-Rule" id="MF_04097"/>
    </source>
</evidence>
<evidence type="ECO:0000255" key="2">
    <source>
        <dbReference type="PROSITE-ProRule" id="PRU01276"/>
    </source>
</evidence>
<evidence type="ECO:0000255" key="3">
    <source>
        <dbReference type="PROSITE-ProRule" id="PRU01277"/>
    </source>
</evidence>
<evidence type="ECO:0000256" key="4">
    <source>
        <dbReference type="SAM" id="MobiDB-lite"/>
    </source>
</evidence>
<evidence type="ECO:0007829" key="5">
    <source>
        <dbReference type="PDB" id="2C86"/>
    </source>
</evidence>
<comment type="function">
    <text evidence="1">Packages the positive strand viral genome RNA into a helical ribonucleocapsid (RNP) and plays a fundamental role during virion assembly through its interactions with the viral genome and membrane protein M. Plays an important role in enhancing the efficiency of subgenomic viral RNA transcription as well as viral replication.</text>
</comment>
<comment type="subunit">
    <text evidence="1">Homooligomer. Both monomeric and oligomeric forms interact with RNA. Interacts with protein M. Interacts with NSP3; this interaction serves to tether the genome to the newly translated replicase-transcriptase complex at a very early stage of infection.</text>
</comment>
<comment type="subcellular location">
    <subcellularLocation>
        <location evidence="1">Virion</location>
    </subcellularLocation>
    <subcellularLocation>
        <location evidence="1">Host endoplasmic reticulum-Golgi intermediate compartment</location>
    </subcellularLocation>
    <subcellularLocation>
        <location evidence="1">Host Golgi apparatus</location>
    </subcellularLocation>
    <text evidence="1">Located inside the virion, complexed with the viral RNA. Probably associates with ER-derived membranes where it participates in viral RNA synthesis and virus budding.</text>
</comment>
<comment type="PTM">
    <text evidence="1">ADP-ribosylated. The ADP-ribosylation is retained in the virion during infection.</text>
</comment>
<comment type="PTM">
    <text evidence="1">Phosphorylated on serine and threonine residues.</text>
</comment>
<comment type="similarity">
    <text evidence="1">Belongs to the gammacoronavirus nucleocapsid protein family.</text>
</comment>
<proteinExistence type="evidence at protein level"/>